<reference key="1">
    <citation type="submission" date="2009-07" db="EMBL/GenBank/DDBJ databases">
        <title>Complete sequence of Pectobacterium carotovorum subsp. carotovorum PC1.</title>
        <authorList>
            <consortium name="US DOE Joint Genome Institute"/>
            <person name="Lucas S."/>
            <person name="Copeland A."/>
            <person name="Lapidus A."/>
            <person name="Glavina del Rio T."/>
            <person name="Tice H."/>
            <person name="Bruce D."/>
            <person name="Goodwin L."/>
            <person name="Pitluck S."/>
            <person name="Munk A.C."/>
            <person name="Brettin T."/>
            <person name="Detter J.C."/>
            <person name="Han C."/>
            <person name="Tapia R."/>
            <person name="Larimer F."/>
            <person name="Land M."/>
            <person name="Hauser L."/>
            <person name="Kyrpides N."/>
            <person name="Mikhailova N."/>
            <person name="Balakrishnan V."/>
            <person name="Glasner J."/>
            <person name="Perna N.T."/>
        </authorList>
    </citation>
    <scope>NUCLEOTIDE SEQUENCE [LARGE SCALE GENOMIC DNA]</scope>
    <source>
        <strain>PC1</strain>
    </source>
</reference>
<protein>
    <recommendedName>
        <fullName evidence="1">ATP-dependent RNA helicase RhlB</fullName>
        <ecNumber evidence="1">3.6.4.13</ecNumber>
    </recommendedName>
</protein>
<organism>
    <name type="scientific">Pectobacterium carotovorum subsp. carotovorum (strain PC1)</name>
    <dbReference type="NCBI Taxonomy" id="561230"/>
    <lineage>
        <taxon>Bacteria</taxon>
        <taxon>Pseudomonadati</taxon>
        <taxon>Pseudomonadota</taxon>
        <taxon>Gammaproteobacteria</taxon>
        <taxon>Enterobacterales</taxon>
        <taxon>Pectobacteriaceae</taxon>
        <taxon>Pectobacterium</taxon>
    </lineage>
</organism>
<evidence type="ECO:0000255" key="1">
    <source>
        <dbReference type="HAMAP-Rule" id="MF_00661"/>
    </source>
</evidence>
<evidence type="ECO:0000256" key="2">
    <source>
        <dbReference type="SAM" id="MobiDB-lite"/>
    </source>
</evidence>
<feature type="chain" id="PRO_1000212477" description="ATP-dependent RNA helicase RhlB">
    <location>
        <begin position="1"/>
        <end position="430"/>
    </location>
</feature>
<feature type="domain" description="Helicase ATP-binding" evidence="1">
    <location>
        <begin position="40"/>
        <end position="219"/>
    </location>
</feature>
<feature type="domain" description="Helicase C-terminal" evidence="1">
    <location>
        <begin position="245"/>
        <end position="390"/>
    </location>
</feature>
<feature type="region of interest" description="Disordered" evidence="2">
    <location>
        <begin position="392"/>
        <end position="430"/>
    </location>
</feature>
<feature type="short sequence motif" description="Q motif">
    <location>
        <begin position="9"/>
        <end position="37"/>
    </location>
</feature>
<feature type="short sequence motif" description="DEAD box">
    <location>
        <begin position="165"/>
        <end position="168"/>
    </location>
</feature>
<feature type="binding site" evidence="1">
    <location>
        <begin position="53"/>
        <end position="60"/>
    </location>
    <ligand>
        <name>ATP</name>
        <dbReference type="ChEBI" id="CHEBI:30616"/>
    </ligand>
</feature>
<comment type="function">
    <text evidence="1">DEAD-box RNA helicase involved in RNA degradation. Has RNA-dependent ATPase activity and unwinds double-stranded RNA.</text>
</comment>
<comment type="catalytic activity">
    <reaction evidence="1">
        <text>ATP + H2O = ADP + phosphate + H(+)</text>
        <dbReference type="Rhea" id="RHEA:13065"/>
        <dbReference type="ChEBI" id="CHEBI:15377"/>
        <dbReference type="ChEBI" id="CHEBI:15378"/>
        <dbReference type="ChEBI" id="CHEBI:30616"/>
        <dbReference type="ChEBI" id="CHEBI:43474"/>
        <dbReference type="ChEBI" id="CHEBI:456216"/>
        <dbReference type="EC" id="3.6.4.13"/>
    </reaction>
</comment>
<comment type="subunit">
    <text evidence="1">Component of the RNA degradosome, which is a multiprotein complex involved in RNA processing and mRNA degradation.</text>
</comment>
<comment type="subcellular location">
    <subcellularLocation>
        <location evidence="1">Cytoplasm</location>
    </subcellularLocation>
</comment>
<comment type="similarity">
    <text evidence="1">Belongs to the DEAD box helicase family. RhlB subfamily.</text>
</comment>
<name>RHLB_PECCP</name>
<proteinExistence type="inferred from homology"/>
<accession>C6DHF5</accession>
<sequence length="430" mass="48227">MSKTHLTEQKFSDFALHPQVIEALESKGFHNCTPIQALALPLALSGRDVAGQAQTGTGKTLAFLASTFHYLLSHPANAERQTNQPRALIMAPTRELAVQIHSDAEALSHLTGLKLGLAYGGDGYDKQLKVLENGVDILIGTTGRLIDYAKQNHINLGAIQVVVLDEADRMYDLGFIKDIRWLFRRMPPAAQRLNMLFSATLSYRVRELAFEQMNNAEYVEVEPEQKTGHRIKEELFYPSNEEKMRLLQTLLEEEWPDRCIIFANTKHRCEDIWGHLAADGHRVGLLTGDVAQKKRLRILEEFTQGNLDILVATDVAARGLHIPSVTHVFNYDLPDDCEDYVHRIGRTGRAGQSGFSISLACEEYALNLPAIETYIGHSIPVSKYNSDALMNDLPAPKRLTRPPRSNNGPRRHNNAPRRSGAPRNNRKRAD</sequence>
<dbReference type="EC" id="3.6.4.13" evidence="1"/>
<dbReference type="EMBL" id="CP001657">
    <property type="protein sequence ID" value="ACT15028.1"/>
    <property type="molecule type" value="Genomic_DNA"/>
</dbReference>
<dbReference type="RefSeq" id="WP_015842107.1">
    <property type="nucleotide sequence ID" value="NC_012917.1"/>
</dbReference>
<dbReference type="SMR" id="C6DHF5"/>
<dbReference type="STRING" id="561230.PC1_4013"/>
<dbReference type="GeneID" id="67792070"/>
<dbReference type="KEGG" id="pct:PC1_4013"/>
<dbReference type="eggNOG" id="COG0513">
    <property type="taxonomic scope" value="Bacteria"/>
</dbReference>
<dbReference type="HOGENOM" id="CLU_003041_1_3_6"/>
<dbReference type="OrthoDB" id="9805696at2"/>
<dbReference type="Proteomes" id="UP000002736">
    <property type="component" value="Chromosome"/>
</dbReference>
<dbReference type="GO" id="GO:0005829">
    <property type="term" value="C:cytosol"/>
    <property type="evidence" value="ECO:0007669"/>
    <property type="project" value="TreeGrafter"/>
</dbReference>
<dbReference type="GO" id="GO:0005524">
    <property type="term" value="F:ATP binding"/>
    <property type="evidence" value="ECO:0007669"/>
    <property type="project" value="UniProtKB-UniRule"/>
</dbReference>
<dbReference type="GO" id="GO:0016887">
    <property type="term" value="F:ATP hydrolysis activity"/>
    <property type="evidence" value="ECO:0007669"/>
    <property type="project" value="RHEA"/>
</dbReference>
<dbReference type="GO" id="GO:0003723">
    <property type="term" value="F:RNA binding"/>
    <property type="evidence" value="ECO:0007669"/>
    <property type="project" value="UniProtKB-UniRule"/>
</dbReference>
<dbReference type="GO" id="GO:0003724">
    <property type="term" value="F:RNA helicase activity"/>
    <property type="evidence" value="ECO:0007669"/>
    <property type="project" value="UniProtKB-UniRule"/>
</dbReference>
<dbReference type="GO" id="GO:0006401">
    <property type="term" value="P:RNA catabolic process"/>
    <property type="evidence" value="ECO:0007669"/>
    <property type="project" value="UniProtKB-UniRule"/>
</dbReference>
<dbReference type="CDD" id="cd00268">
    <property type="entry name" value="DEADc"/>
    <property type="match status" value="1"/>
</dbReference>
<dbReference type="CDD" id="cd18787">
    <property type="entry name" value="SF2_C_DEAD"/>
    <property type="match status" value="1"/>
</dbReference>
<dbReference type="FunFam" id="3.40.50.300:FF:000008">
    <property type="entry name" value="ATP-dependent RNA helicase RhlB"/>
    <property type="match status" value="1"/>
</dbReference>
<dbReference type="FunFam" id="3.40.50.300:FF:000312">
    <property type="entry name" value="ATP-dependent RNA helicase RhlB"/>
    <property type="match status" value="1"/>
</dbReference>
<dbReference type="Gene3D" id="3.40.50.300">
    <property type="entry name" value="P-loop containing nucleotide triphosphate hydrolases"/>
    <property type="match status" value="2"/>
</dbReference>
<dbReference type="HAMAP" id="MF_00661">
    <property type="entry name" value="DEAD_helicase_RhlB"/>
    <property type="match status" value="1"/>
</dbReference>
<dbReference type="InterPro" id="IPR011545">
    <property type="entry name" value="DEAD/DEAH_box_helicase_dom"/>
</dbReference>
<dbReference type="InterPro" id="IPR050079">
    <property type="entry name" value="DEAD_box_RNA_helicase"/>
</dbReference>
<dbReference type="InterPro" id="IPR014001">
    <property type="entry name" value="Helicase_ATP-bd"/>
</dbReference>
<dbReference type="InterPro" id="IPR001650">
    <property type="entry name" value="Helicase_C-like"/>
</dbReference>
<dbReference type="InterPro" id="IPR027417">
    <property type="entry name" value="P-loop_NTPase"/>
</dbReference>
<dbReference type="InterPro" id="IPR000629">
    <property type="entry name" value="RNA-helicase_DEAD-box_CS"/>
</dbReference>
<dbReference type="InterPro" id="IPR023554">
    <property type="entry name" value="RNA_helicase_ATP-dep_RhlB"/>
</dbReference>
<dbReference type="InterPro" id="IPR014014">
    <property type="entry name" value="RNA_helicase_DEAD_Q_motif"/>
</dbReference>
<dbReference type="NCBIfam" id="NF003419">
    <property type="entry name" value="PRK04837.1"/>
    <property type="match status" value="1"/>
</dbReference>
<dbReference type="PANTHER" id="PTHR47959:SF10">
    <property type="entry name" value="ATP-DEPENDENT RNA HELICASE RHLB"/>
    <property type="match status" value="1"/>
</dbReference>
<dbReference type="PANTHER" id="PTHR47959">
    <property type="entry name" value="ATP-DEPENDENT RNA HELICASE RHLE-RELATED"/>
    <property type="match status" value="1"/>
</dbReference>
<dbReference type="Pfam" id="PF00270">
    <property type="entry name" value="DEAD"/>
    <property type="match status" value="1"/>
</dbReference>
<dbReference type="Pfam" id="PF00271">
    <property type="entry name" value="Helicase_C"/>
    <property type="match status" value="1"/>
</dbReference>
<dbReference type="SMART" id="SM00487">
    <property type="entry name" value="DEXDc"/>
    <property type="match status" value="1"/>
</dbReference>
<dbReference type="SMART" id="SM00490">
    <property type="entry name" value="HELICc"/>
    <property type="match status" value="1"/>
</dbReference>
<dbReference type="SUPFAM" id="SSF52540">
    <property type="entry name" value="P-loop containing nucleoside triphosphate hydrolases"/>
    <property type="match status" value="1"/>
</dbReference>
<dbReference type="PROSITE" id="PS00039">
    <property type="entry name" value="DEAD_ATP_HELICASE"/>
    <property type="match status" value="1"/>
</dbReference>
<dbReference type="PROSITE" id="PS51192">
    <property type="entry name" value="HELICASE_ATP_BIND_1"/>
    <property type="match status" value="1"/>
</dbReference>
<dbReference type="PROSITE" id="PS51194">
    <property type="entry name" value="HELICASE_CTER"/>
    <property type="match status" value="1"/>
</dbReference>
<dbReference type="PROSITE" id="PS51195">
    <property type="entry name" value="Q_MOTIF"/>
    <property type="match status" value="1"/>
</dbReference>
<gene>
    <name evidence="1" type="primary">rhlB</name>
    <name type="ordered locus">PC1_4013</name>
</gene>
<keyword id="KW-0067">ATP-binding</keyword>
<keyword id="KW-0963">Cytoplasm</keyword>
<keyword id="KW-0347">Helicase</keyword>
<keyword id="KW-0378">Hydrolase</keyword>
<keyword id="KW-0547">Nucleotide-binding</keyword>
<keyword id="KW-0694">RNA-binding</keyword>